<gene>
    <name type="primary">mmr</name>
    <name type="ordered locus">BSU37570</name>
</gene>
<keyword id="KW-0046">Antibiotic resistance</keyword>
<keyword id="KW-1003">Cell membrane</keyword>
<keyword id="KW-0472">Membrane</keyword>
<keyword id="KW-1185">Reference proteome</keyword>
<keyword id="KW-0812">Transmembrane</keyword>
<keyword id="KW-1133">Transmembrane helix</keyword>
<keyword id="KW-0813">Transport</keyword>
<accession>Q00538</accession>
<sequence length="466" mass="48845">MKNSGSIQESTSSTGISVLIVLALGFLMATLDVTVVNVAMADMKNTLSMSLSGVTWVVDGYILTFASLLLAGGALADRFGSKTIYILGLAVFVMASCLCAASINGQMLIAGRLIQGIGAALFMPSSLSLLAASYLDERARARMFGLWAALVSAASALGPFIGGVLVQLAGWQSIFLINVPIGAAALISAYRILSRVPGKSSRVNIIGHLLGMMALGFLSYALIQGPSAGWRSPVILVAFTAAVLAFVLFLLREISAKTPILPASLYKNGRFSAAQFIGFLLNFALFGGMFMLSLFLQEAGGASSFMAGVELLPMMAVFVIGNLLFARLANRFEAGQLMFVSMAVSCIIALLLFVLISPDFPYWQLAVLMSVMNLCTGITVPAMTTVIMQAAGQRHTNIAGAALNANRQIGALVGVAITGVIIHLSATWYAGAGFAFLMMGAAYSLAALLVWLFLAAHNGTAASEKM</sequence>
<proteinExistence type="inferred from homology"/>
<protein>
    <recommendedName>
        <fullName>Methylenomycin A resistance protein</fullName>
    </recommendedName>
    <alternativeName>
        <fullName>MMR peptide</fullName>
    </alternativeName>
</protein>
<dbReference type="EMBL" id="X66121">
    <property type="protein sequence ID" value="CAA46908.1"/>
    <property type="molecule type" value="Genomic_DNA"/>
</dbReference>
<dbReference type="EMBL" id="AL009126">
    <property type="protein sequence ID" value="CAB15784.1"/>
    <property type="molecule type" value="Genomic_DNA"/>
</dbReference>
<dbReference type="PIR" id="I40493">
    <property type="entry name" value="YTBSMA"/>
</dbReference>
<dbReference type="RefSeq" id="NP_391637.1">
    <property type="nucleotide sequence ID" value="NC_000964.3"/>
</dbReference>
<dbReference type="RefSeq" id="WP_003243441.1">
    <property type="nucleotide sequence ID" value="NZ_OZ025638.1"/>
</dbReference>
<dbReference type="SMR" id="Q00538"/>
<dbReference type="FunCoup" id="Q00538">
    <property type="interactions" value="353"/>
</dbReference>
<dbReference type="STRING" id="224308.BSU37570"/>
<dbReference type="TCDB" id="2.A.1.3.10">
    <property type="family name" value="the major facilitator superfamily (mfs)"/>
</dbReference>
<dbReference type="PaxDb" id="224308-BSU37570"/>
<dbReference type="EnsemblBacteria" id="CAB15784">
    <property type="protein sequence ID" value="CAB15784"/>
    <property type="gene ID" value="BSU_37570"/>
</dbReference>
<dbReference type="GeneID" id="937101"/>
<dbReference type="KEGG" id="bsu:BSU37570"/>
<dbReference type="PATRIC" id="fig|224308.179.peg.4069"/>
<dbReference type="eggNOG" id="COG0477">
    <property type="taxonomic scope" value="Bacteria"/>
</dbReference>
<dbReference type="InParanoid" id="Q00538"/>
<dbReference type="OrthoDB" id="2414439at2"/>
<dbReference type="PhylomeDB" id="Q00538"/>
<dbReference type="BioCyc" id="BSUB:BSU37570-MONOMER"/>
<dbReference type="Proteomes" id="UP000001570">
    <property type="component" value="Chromosome"/>
</dbReference>
<dbReference type="GO" id="GO:0016020">
    <property type="term" value="C:membrane"/>
    <property type="evidence" value="ECO:0000318"/>
    <property type="project" value="GO_Central"/>
</dbReference>
<dbReference type="GO" id="GO:0005886">
    <property type="term" value="C:plasma membrane"/>
    <property type="evidence" value="ECO:0007669"/>
    <property type="project" value="UniProtKB-SubCell"/>
</dbReference>
<dbReference type="GO" id="GO:0022857">
    <property type="term" value="F:transmembrane transporter activity"/>
    <property type="evidence" value="ECO:0007669"/>
    <property type="project" value="InterPro"/>
</dbReference>
<dbReference type="GO" id="GO:0046677">
    <property type="term" value="P:response to antibiotic"/>
    <property type="evidence" value="ECO:0007669"/>
    <property type="project" value="UniProtKB-KW"/>
</dbReference>
<dbReference type="CDD" id="cd17321">
    <property type="entry name" value="MFS_MMR_MDR_like"/>
    <property type="match status" value="1"/>
</dbReference>
<dbReference type="Gene3D" id="1.20.1250.20">
    <property type="entry name" value="MFS general substrate transporter like domains"/>
    <property type="match status" value="1"/>
</dbReference>
<dbReference type="Gene3D" id="1.20.1720.10">
    <property type="entry name" value="Multidrug resistance protein D"/>
    <property type="match status" value="1"/>
</dbReference>
<dbReference type="InterPro" id="IPR004638">
    <property type="entry name" value="EmrB-like"/>
</dbReference>
<dbReference type="InterPro" id="IPR011701">
    <property type="entry name" value="MFS"/>
</dbReference>
<dbReference type="InterPro" id="IPR020846">
    <property type="entry name" value="MFS_dom"/>
</dbReference>
<dbReference type="InterPro" id="IPR036259">
    <property type="entry name" value="MFS_trans_sf"/>
</dbReference>
<dbReference type="NCBIfam" id="TIGR00711">
    <property type="entry name" value="efflux_EmrB"/>
    <property type="match status" value="1"/>
</dbReference>
<dbReference type="PANTHER" id="PTHR42718">
    <property type="entry name" value="MAJOR FACILITATOR SUPERFAMILY MULTIDRUG TRANSPORTER MFSC"/>
    <property type="match status" value="1"/>
</dbReference>
<dbReference type="PANTHER" id="PTHR42718:SF40">
    <property type="entry name" value="METHYLENOMYCIN A RESISTANCE PROTEIN"/>
    <property type="match status" value="1"/>
</dbReference>
<dbReference type="Pfam" id="PF07690">
    <property type="entry name" value="MFS_1"/>
    <property type="match status" value="2"/>
</dbReference>
<dbReference type="SUPFAM" id="SSF103473">
    <property type="entry name" value="MFS general substrate transporter"/>
    <property type="match status" value="2"/>
</dbReference>
<dbReference type="PROSITE" id="PS50850">
    <property type="entry name" value="MFS"/>
    <property type="match status" value="1"/>
</dbReference>
<organism>
    <name type="scientific">Bacillus subtilis (strain 168)</name>
    <dbReference type="NCBI Taxonomy" id="224308"/>
    <lineage>
        <taxon>Bacteria</taxon>
        <taxon>Bacillati</taxon>
        <taxon>Bacillota</taxon>
        <taxon>Bacilli</taxon>
        <taxon>Bacillales</taxon>
        <taxon>Bacillaceae</taxon>
        <taxon>Bacillus</taxon>
    </lineage>
</organism>
<evidence type="ECO:0000255" key="1"/>
<evidence type="ECO:0000305" key="2"/>
<feature type="chain" id="PRO_0000173364" description="Methylenomycin A resistance protein">
    <location>
        <begin position="1"/>
        <end position="466"/>
    </location>
</feature>
<feature type="transmembrane region" description="Helical" evidence="1">
    <location>
        <begin position="16"/>
        <end position="36"/>
    </location>
</feature>
<feature type="transmembrane region" description="Helical" evidence="1">
    <location>
        <begin position="56"/>
        <end position="76"/>
    </location>
</feature>
<feature type="transmembrane region" description="Helical" evidence="1">
    <location>
        <begin position="83"/>
        <end position="103"/>
    </location>
</feature>
<feature type="transmembrane region" description="Helical" evidence="1">
    <location>
        <begin position="113"/>
        <end position="133"/>
    </location>
</feature>
<feature type="transmembrane region" description="Helical" evidence="1">
    <location>
        <begin position="146"/>
        <end position="166"/>
    </location>
</feature>
<feature type="transmembrane region" description="Helical" evidence="1">
    <location>
        <begin position="168"/>
        <end position="188"/>
    </location>
</feature>
<feature type="transmembrane region" description="Helical" evidence="1">
    <location>
        <begin position="203"/>
        <end position="223"/>
    </location>
</feature>
<feature type="transmembrane region" description="Helical" evidence="1">
    <location>
        <begin position="234"/>
        <end position="254"/>
    </location>
</feature>
<feature type="transmembrane region" description="Helical" evidence="1">
    <location>
        <begin position="276"/>
        <end position="296"/>
    </location>
</feature>
<feature type="transmembrane region" description="Helical" evidence="1">
    <location>
        <begin position="305"/>
        <end position="325"/>
    </location>
</feature>
<feature type="transmembrane region" description="Helical" evidence="1">
    <location>
        <begin position="337"/>
        <end position="357"/>
    </location>
</feature>
<feature type="transmembrane region" description="Helical" evidence="1">
    <location>
        <begin position="367"/>
        <end position="387"/>
    </location>
</feature>
<feature type="transmembrane region" description="Helical" evidence="1">
    <location>
        <begin position="409"/>
        <end position="429"/>
    </location>
</feature>
<feature type="transmembrane region" description="Helical" evidence="1">
    <location>
        <begin position="434"/>
        <end position="454"/>
    </location>
</feature>
<reference key="1">
    <citation type="journal article" date="1992" name="EMBO J.">
        <title>Co-ordinate expression of the two threonyl-tRNA synthetase genes in Bacillus subtilis: control by transcriptional antitermination involving a conserved regulatory sequence.</title>
        <authorList>
            <person name="Putzer H."/>
            <person name="Gendron N."/>
            <person name="Grunberg-Manago M."/>
        </authorList>
    </citation>
    <scope>NUCLEOTIDE SEQUENCE [GENOMIC DNA]</scope>
    <source>
        <strain>168</strain>
    </source>
</reference>
<reference key="2">
    <citation type="journal article" date="1997" name="Nature">
        <title>The complete genome sequence of the Gram-positive bacterium Bacillus subtilis.</title>
        <authorList>
            <person name="Kunst F."/>
            <person name="Ogasawara N."/>
            <person name="Moszer I."/>
            <person name="Albertini A.M."/>
            <person name="Alloni G."/>
            <person name="Azevedo V."/>
            <person name="Bertero M.G."/>
            <person name="Bessieres P."/>
            <person name="Bolotin A."/>
            <person name="Borchert S."/>
            <person name="Borriss R."/>
            <person name="Boursier L."/>
            <person name="Brans A."/>
            <person name="Braun M."/>
            <person name="Brignell S.C."/>
            <person name="Bron S."/>
            <person name="Brouillet S."/>
            <person name="Bruschi C.V."/>
            <person name="Caldwell B."/>
            <person name="Capuano V."/>
            <person name="Carter N.M."/>
            <person name="Choi S.-K."/>
            <person name="Codani J.-J."/>
            <person name="Connerton I.F."/>
            <person name="Cummings N.J."/>
            <person name="Daniel R.A."/>
            <person name="Denizot F."/>
            <person name="Devine K.M."/>
            <person name="Duesterhoeft A."/>
            <person name="Ehrlich S.D."/>
            <person name="Emmerson P.T."/>
            <person name="Entian K.-D."/>
            <person name="Errington J."/>
            <person name="Fabret C."/>
            <person name="Ferrari E."/>
            <person name="Foulger D."/>
            <person name="Fritz C."/>
            <person name="Fujita M."/>
            <person name="Fujita Y."/>
            <person name="Fuma S."/>
            <person name="Galizzi A."/>
            <person name="Galleron N."/>
            <person name="Ghim S.-Y."/>
            <person name="Glaser P."/>
            <person name="Goffeau A."/>
            <person name="Golightly E.J."/>
            <person name="Grandi G."/>
            <person name="Guiseppi G."/>
            <person name="Guy B.J."/>
            <person name="Haga K."/>
            <person name="Haiech J."/>
            <person name="Harwood C.R."/>
            <person name="Henaut A."/>
            <person name="Hilbert H."/>
            <person name="Holsappel S."/>
            <person name="Hosono S."/>
            <person name="Hullo M.-F."/>
            <person name="Itaya M."/>
            <person name="Jones L.-M."/>
            <person name="Joris B."/>
            <person name="Karamata D."/>
            <person name="Kasahara Y."/>
            <person name="Klaerr-Blanchard M."/>
            <person name="Klein C."/>
            <person name="Kobayashi Y."/>
            <person name="Koetter P."/>
            <person name="Koningstein G."/>
            <person name="Krogh S."/>
            <person name="Kumano M."/>
            <person name="Kurita K."/>
            <person name="Lapidus A."/>
            <person name="Lardinois S."/>
            <person name="Lauber J."/>
            <person name="Lazarevic V."/>
            <person name="Lee S.-M."/>
            <person name="Levine A."/>
            <person name="Liu H."/>
            <person name="Masuda S."/>
            <person name="Mauel C."/>
            <person name="Medigue C."/>
            <person name="Medina N."/>
            <person name="Mellado R.P."/>
            <person name="Mizuno M."/>
            <person name="Moestl D."/>
            <person name="Nakai S."/>
            <person name="Noback M."/>
            <person name="Noone D."/>
            <person name="O'Reilly M."/>
            <person name="Ogawa K."/>
            <person name="Ogiwara A."/>
            <person name="Oudega B."/>
            <person name="Park S.-H."/>
            <person name="Parro V."/>
            <person name="Pohl T.M."/>
            <person name="Portetelle D."/>
            <person name="Porwollik S."/>
            <person name="Prescott A.M."/>
            <person name="Presecan E."/>
            <person name="Pujic P."/>
            <person name="Purnelle B."/>
            <person name="Rapoport G."/>
            <person name="Rey M."/>
            <person name="Reynolds S."/>
            <person name="Rieger M."/>
            <person name="Rivolta C."/>
            <person name="Rocha E."/>
            <person name="Roche B."/>
            <person name="Rose M."/>
            <person name="Sadaie Y."/>
            <person name="Sato T."/>
            <person name="Scanlan E."/>
            <person name="Schleich S."/>
            <person name="Schroeter R."/>
            <person name="Scoffone F."/>
            <person name="Sekiguchi J."/>
            <person name="Sekowska A."/>
            <person name="Seror S.J."/>
            <person name="Serror P."/>
            <person name="Shin B.-S."/>
            <person name="Soldo B."/>
            <person name="Sorokin A."/>
            <person name="Tacconi E."/>
            <person name="Takagi T."/>
            <person name="Takahashi H."/>
            <person name="Takemaru K."/>
            <person name="Takeuchi M."/>
            <person name="Tamakoshi A."/>
            <person name="Tanaka T."/>
            <person name="Terpstra P."/>
            <person name="Tognoni A."/>
            <person name="Tosato V."/>
            <person name="Uchiyama S."/>
            <person name="Vandenbol M."/>
            <person name="Vannier F."/>
            <person name="Vassarotti A."/>
            <person name="Viari A."/>
            <person name="Wambutt R."/>
            <person name="Wedler E."/>
            <person name="Wedler H."/>
            <person name="Weitzenegger T."/>
            <person name="Winters P."/>
            <person name="Wipat A."/>
            <person name="Yamamoto H."/>
            <person name="Yamane K."/>
            <person name="Yasumoto K."/>
            <person name="Yata K."/>
            <person name="Yoshida K."/>
            <person name="Yoshikawa H.-F."/>
            <person name="Zumstein E."/>
            <person name="Yoshikawa H."/>
            <person name="Danchin A."/>
        </authorList>
    </citation>
    <scope>NUCLEOTIDE SEQUENCE [LARGE SCALE GENOMIC DNA]</scope>
    <source>
        <strain>168</strain>
    </source>
</reference>
<comment type="function">
    <text>Resistance to the epoxide antibiotic methylenomycin.</text>
</comment>
<comment type="subcellular location">
    <subcellularLocation>
        <location>Cell membrane</location>
        <topology>Multi-pass membrane protein</topology>
    </subcellularLocation>
</comment>
<comment type="similarity">
    <text evidence="2">Belongs to the major facilitator superfamily. EmrB family.</text>
</comment>
<name>MMR_BACSU</name>